<protein>
    <recommendedName>
        <fullName>Carboxypeptidase M</fullName>
        <shortName>CPM</shortName>
        <ecNumber evidence="3">3.4.17.12</ecNumber>
    </recommendedName>
</protein>
<keyword id="KW-0002">3D-structure</keyword>
<keyword id="KW-0121">Carboxypeptidase</keyword>
<keyword id="KW-1003">Cell membrane</keyword>
<keyword id="KW-0903">Direct protein sequencing</keyword>
<keyword id="KW-1015">Disulfide bond</keyword>
<keyword id="KW-0325">Glycoprotein</keyword>
<keyword id="KW-0336">GPI-anchor</keyword>
<keyword id="KW-0378">Hydrolase</keyword>
<keyword id="KW-0449">Lipoprotein</keyword>
<keyword id="KW-0472">Membrane</keyword>
<keyword id="KW-0479">Metal-binding</keyword>
<keyword id="KW-0482">Metalloprotease</keyword>
<keyword id="KW-0645">Protease</keyword>
<keyword id="KW-1267">Proteomics identification</keyword>
<keyword id="KW-1185">Reference proteome</keyword>
<keyword id="KW-0732">Signal</keyword>
<keyword id="KW-0862">Zinc</keyword>
<feature type="signal peptide" evidence="3 6">
    <location>
        <begin position="1"/>
        <end position="17"/>
    </location>
</feature>
<feature type="chain" id="PRO_0000004391" description="Carboxypeptidase M">
    <location>
        <begin position="18"/>
        <end position="423"/>
    </location>
</feature>
<feature type="propeptide" id="PRO_0000251910" description="Removed in mature form" evidence="7">
    <location>
        <begin position="424"/>
        <end position="443"/>
    </location>
</feature>
<feature type="domain" description="Peptidase M14" evidence="2">
    <location>
        <begin position="21"/>
        <end position="311"/>
    </location>
</feature>
<feature type="active site" description="Proton donor/acceptor" evidence="2 8">
    <location>
        <position position="281"/>
    </location>
</feature>
<feature type="binding site" evidence="2 4 9">
    <location>
        <position position="83"/>
    </location>
    <ligand>
        <name>Zn(2+)</name>
        <dbReference type="ChEBI" id="CHEBI:29105"/>
        <note>catalytic</note>
    </ligand>
</feature>
<feature type="binding site" evidence="2 4 9">
    <location>
        <position position="86"/>
    </location>
    <ligand>
        <name>Zn(2+)</name>
        <dbReference type="ChEBI" id="CHEBI:29105"/>
        <note>catalytic</note>
    </ligand>
</feature>
<feature type="binding site" evidence="2 4 9">
    <location>
        <position position="190"/>
    </location>
    <ligand>
        <name>Zn(2+)</name>
        <dbReference type="ChEBI" id="CHEBI:29105"/>
        <note>catalytic</note>
    </ligand>
</feature>
<feature type="site" description="Probable structural role" evidence="8">
    <location>
        <position position="277"/>
    </location>
</feature>
<feature type="lipid moiety-binding region" description="GPI-anchor amidated serine" evidence="3">
    <location>
        <position position="423"/>
    </location>
</feature>
<feature type="glycosylation site" description="N-linked (GlcNAc...) asparagine" evidence="4">
    <location>
        <position position="38"/>
    </location>
</feature>
<feature type="glycosylation site" description="N-linked (GlcNAc...) asparagine" evidence="4 5 9">
    <location>
        <position position="115"/>
    </location>
</feature>
<feature type="glycosylation site" description="N-linked (GlcNAc...) asparagine" evidence="5">
    <location>
        <position position="164"/>
    </location>
</feature>
<feature type="glycosylation site" description="N-linked (GlcNAc...) asparagine" evidence="1">
    <location>
        <position position="363"/>
    </location>
</feature>
<feature type="glycosylation site" description="N-linked (GlcNAc...) asparagine" evidence="1">
    <location>
        <position position="384"/>
    </location>
</feature>
<feature type="disulfide bond" evidence="4 9">
    <location>
        <begin position="138"/>
        <end position="285"/>
    </location>
</feature>
<feature type="disulfide bond" evidence="4 9">
    <location>
        <begin position="242"/>
        <end position="284"/>
    </location>
</feature>
<feature type="disulfide bond" evidence="4 9">
    <location>
        <begin position="341"/>
        <end position="410"/>
    </location>
</feature>
<feature type="sequence variant" id="VAR_048600" description="In dbSNP:rs7978197.">
    <original>R</original>
    <variation>H</variation>
    <location>
        <position position="24"/>
    </location>
</feature>
<feature type="sequence variant" id="VAR_048601" description="In dbSNP:rs7309831.">
    <original>V</original>
    <variation>I</variation>
    <location>
        <position position="133"/>
    </location>
</feature>
<feature type="mutagenesis site" description="5-fold decrease in substrate affinity. 22-fold decrease in specific affinity. 104-fold decrease in catalytic efficiency. Greatly reduced heat stability." evidence="3">
    <original>E</original>
    <variation>A</variation>
    <location>
        <position position="277"/>
    </location>
</feature>
<feature type="mutagenesis site" description="2-fold decrease in substrate affinity. Small increase in specific affinity. Reduced heat stability by 50%." evidence="3">
    <original>E</original>
    <variation>Q</variation>
    <location>
        <position position="277"/>
    </location>
</feature>
<feature type="mutagenesis site" description="Abolishes enzyme activity." evidence="3">
    <original>E</original>
    <variation>Q</variation>
    <location>
        <position position="281"/>
    </location>
</feature>
<feature type="mutagenesis site" description="Expressed on cell membrane. Released from membrane by PI-PLC." evidence="3">
    <original>S</original>
    <variation>A</variation>
    <variation>T</variation>
    <location>
        <position position="423"/>
    </location>
</feature>
<feature type="mutagenesis site" description="Little expression on cell membrane. Perinuclear localization. Not released from membrane by PI-PLC." evidence="3">
    <original>S</original>
    <variation>P</variation>
    <location>
        <position position="423"/>
    </location>
</feature>
<feature type="helix" evidence="10">
    <location>
        <begin position="25"/>
        <end position="38"/>
    </location>
</feature>
<feature type="turn" evidence="10">
    <location>
        <begin position="39"/>
        <end position="41"/>
    </location>
</feature>
<feature type="strand" evidence="10">
    <location>
        <begin position="42"/>
        <end position="50"/>
    </location>
</feature>
<feature type="strand" evidence="10">
    <location>
        <begin position="56"/>
        <end position="65"/>
    </location>
</feature>
<feature type="strand" evidence="10">
    <location>
        <begin position="75"/>
        <end position="80"/>
    </location>
</feature>
<feature type="helix" evidence="10">
    <location>
        <begin position="88"/>
        <end position="103"/>
    </location>
</feature>
<feature type="turn" evidence="10">
    <location>
        <begin position="104"/>
        <end position="106"/>
    </location>
</feature>
<feature type="helix" evidence="10">
    <location>
        <begin position="108"/>
        <end position="116"/>
    </location>
</feature>
<feature type="strand" evidence="10">
    <location>
        <begin position="118"/>
        <end position="123"/>
    </location>
</feature>
<feature type="helix" evidence="10">
    <location>
        <begin position="127"/>
        <end position="132"/>
    </location>
</feature>
<feature type="strand" evidence="10">
    <location>
        <begin position="159"/>
        <end position="161"/>
    </location>
</feature>
<feature type="helix" evidence="10">
    <location>
        <begin position="169"/>
        <end position="180"/>
    </location>
</feature>
<feature type="strand" evidence="10">
    <location>
        <begin position="183"/>
        <end position="185"/>
    </location>
</feature>
<feature type="strand" evidence="10">
    <location>
        <begin position="188"/>
        <end position="190"/>
    </location>
</feature>
<feature type="strand" evidence="10">
    <location>
        <begin position="192"/>
        <end position="199"/>
    </location>
</feature>
<feature type="helix" evidence="10">
    <location>
        <begin position="205"/>
        <end position="207"/>
    </location>
</feature>
<feature type="helix" evidence="10">
    <location>
        <begin position="209"/>
        <end position="211"/>
    </location>
</feature>
<feature type="helix" evidence="10">
    <location>
        <begin position="219"/>
        <end position="231"/>
    </location>
</feature>
<feature type="turn" evidence="10">
    <location>
        <begin position="234"/>
        <end position="238"/>
    </location>
</feature>
<feature type="strand" evidence="10">
    <location>
        <begin position="243"/>
        <end position="245"/>
    </location>
</feature>
<feature type="strand" evidence="10">
    <location>
        <begin position="252"/>
        <end position="255"/>
    </location>
</feature>
<feature type="turn" evidence="10">
    <location>
        <begin position="256"/>
        <end position="258"/>
    </location>
</feature>
<feature type="helix" evidence="10">
    <location>
        <begin position="265"/>
        <end position="271"/>
    </location>
</feature>
<feature type="strand" evidence="10">
    <location>
        <begin position="279"/>
        <end position="287"/>
    </location>
</feature>
<feature type="helix" evidence="10">
    <location>
        <begin position="290"/>
        <end position="292"/>
    </location>
</feature>
<feature type="helix" evidence="10">
    <location>
        <begin position="293"/>
        <end position="298"/>
    </location>
</feature>
<feature type="helix" evidence="10">
    <location>
        <begin position="301"/>
        <end position="308"/>
    </location>
</feature>
<feature type="helix" evidence="10">
    <location>
        <begin position="309"/>
        <end position="312"/>
    </location>
</feature>
<feature type="strand" evidence="10">
    <location>
        <begin position="314"/>
        <end position="320"/>
    </location>
</feature>
<feature type="strand" evidence="10">
    <location>
        <begin position="331"/>
        <end position="334"/>
    </location>
</feature>
<feature type="strand" evidence="10">
    <location>
        <begin position="350"/>
        <end position="353"/>
    </location>
</feature>
<feature type="strand" evidence="10">
    <location>
        <begin position="357"/>
        <end position="365"/>
    </location>
</feature>
<feature type="strand" evidence="10">
    <location>
        <begin position="367"/>
        <end position="369"/>
    </location>
</feature>
<feature type="strand" evidence="10">
    <location>
        <begin position="372"/>
        <end position="378"/>
    </location>
</feature>
<feature type="strand" evidence="10">
    <location>
        <begin position="383"/>
        <end position="386"/>
    </location>
</feature>
<feature type="turn" evidence="10">
    <location>
        <begin position="415"/>
        <end position="418"/>
    </location>
</feature>
<gene>
    <name type="primary">CPM</name>
</gene>
<comment type="function">
    <text evidence="3">Specifically removes C-terminal basic residues (Arg or Lys) from peptides and proteins. It is believed to play important roles in the control of peptide hormone and growth factor activity at the cell surface, and in the membrane-localized degradation of extracellular proteins.</text>
</comment>
<comment type="catalytic activity">
    <reaction evidence="3">
        <text>Cleavage of C-terminal arginine or lysine residues from polypeptides.</text>
        <dbReference type="EC" id="3.4.17.12"/>
    </reaction>
</comment>
<comment type="cofactor">
    <cofactor evidence="4">
        <name>Zn(2+)</name>
        <dbReference type="ChEBI" id="CHEBI:29105"/>
    </cofactor>
    <text evidence="4">Binds 1 zinc ion per subunit.</text>
</comment>
<comment type="activity regulation">
    <text>Inhibited by O-phenanthroline and MGTA and activated by cobalt.</text>
</comment>
<comment type="biophysicochemical properties">
    <kinetics>
        <KM evidence="3">59 uM for synthetic dansyl-Ala-Arg</KM>
        <KM evidence="3">57 uM for placental peptide hormones</KM>
    </kinetics>
    <phDependence>
        <text evidence="3">Optimum pH is 7.0.</text>
    </phDependence>
</comment>
<comment type="subcellular location">
    <subcellularLocation>
        <location evidence="3">Cell membrane</location>
        <topology evidence="3">Lipid-anchor</topology>
        <topology evidence="3">GPI-anchor</topology>
    </subcellularLocation>
</comment>
<comment type="similarity">
    <text evidence="7">Belongs to the peptidase M14 family.</text>
</comment>
<organism>
    <name type="scientific">Homo sapiens</name>
    <name type="common">Human</name>
    <dbReference type="NCBI Taxonomy" id="9606"/>
    <lineage>
        <taxon>Eukaryota</taxon>
        <taxon>Metazoa</taxon>
        <taxon>Chordata</taxon>
        <taxon>Craniata</taxon>
        <taxon>Vertebrata</taxon>
        <taxon>Euteleostomi</taxon>
        <taxon>Mammalia</taxon>
        <taxon>Eutheria</taxon>
        <taxon>Euarchontoglires</taxon>
        <taxon>Primates</taxon>
        <taxon>Haplorrhini</taxon>
        <taxon>Catarrhini</taxon>
        <taxon>Hominidae</taxon>
        <taxon>Homo</taxon>
    </lineage>
</organism>
<evidence type="ECO:0000255" key="1"/>
<evidence type="ECO:0000255" key="2">
    <source>
        <dbReference type="PROSITE-ProRule" id="PRU01379"/>
    </source>
</evidence>
<evidence type="ECO:0000269" key="3">
    <source>
    </source>
</evidence>
<evidence type="ECO:0000269" key="4">
    <source>
    </source>
</evidence>
<evidence type="ECO:0000269" key="5">
    <source>
    </source>
</evidence>
<evidence type="ECO:0000269" key="6">
    <source>
    </source>
</evidence>
<evidence type="ECO:0000305" key="7"/>
<evidence type="ECO:0000305" key="8">
    <source>
    </source>
</evidence>
<evidence type="ECO:0007744" key="9">
    <source>
        <dbReference type="PDB" id="1UWY"/>
    </source>
</evidence>
<evidence type="ECO:0007829" key="10">
    <source>
        <dbReference type="PDB" id="1UWY"/>
    </source>
</evidence>
<proteinExistence type="evidence at protein level"/>
<reference key="1">
    <citation type="journal article" date="1989" name="J. Biol. Chem.">
        <title>Molecular cloning and sequencing of the cDNA for human membrane-bound carboxypeptidase M. Comparison with carboxypeptidases A, B, H, and N.</title>
        <authorList>
            <person name="Tan F."/>
            <person name="Chan S.J."/>
            <person name="Steiner D.F."/>
            <person name="Schilling J.W."/>
            <person name="Skidgel R.A."/>
        </authorList>
    </citation>
    <scope>NUCLEOTIDE SEQUENCE [MRNA]</scope>
    <scope>PROTEIN SEQUENCE OF 18-48</scope>
    <source>
        <tissue>Placenta</tissue>
    </source>
</reference>
<reference key="2">
    <citation type="submission" date="1999-08" db="EMBL/GenBank/DDBJ databases">
        <authorList>
            <person name="Skidgel R.A."/>
        </authorList>
    </citation>
    <scope>SEQUENCE REVISION</scope>
</reference>
<reference key="3">
    <citation type="journal article" date="2001" name="Diabetes">
        <title>Type 2 diabetes locus on 12q15: further mapping and mutation screening of two candidate genes.</title>
        <authorList>
            <person name="Bektas A."/>
            <person name="Hughes J.N."/>
            <person name="Warram J.H."/>
            <person name="Krolewski A.S."/>
            <person name="Doria A."/>
        </authorList>
    </citation>
    <scope>NUCLEOTIDE SEQUENCE [GENOMIC DNA]</scope>
</reference>
<reference key="4">
    <citation type="journal article" date="2002" name="Biol. Chem.">
        <title>Molecular structure and alternative splicing of the human carboxypeptidase M gene.</title>
        <authorList>
            <person name="Pessoa L.G."/>
            <person name="Guerreiro da S.I."/>
            <person name="Baptista H.A."/>
            <person name="Pesquero J.L."/>
            <person name="Paiva A.C.M."/>
            <person name="Bader M."/>
            <person name="Pesquero J.B."/>
        </authorList>
    </citation>
    <scope>NUCLEOTIDE SEQUENCE [MRNA]</scope>
</reference>
<reference key="5">
    <citation type="journal article" date="2004" name="Nat. Genet.">
        <title>Complete sequencing and characterization of 21,243 full-length human cDNAs.</title>
        <authorList>
            <person name="Ota T."/>
            <person name="Suzuki Y."/>
            <person name="Nishikawa T."/>
            <person name="Otsuki T."/>
            <person name="Sugiyama T."/>
            <person name="Irie R."/>
            <person name="Wakamatsu A."/>
            <person name="Hayashi K."/>
            <person name="Sato H."/>
            <person name="Nagai K."/>
            <person name="Kimura K."/>
            <person name="Makita H."/>
            <person name="Sekine M."/>
            <person name="Obayashi M."/>
            <person name="Nishi T."/>
            <person name="Shibahara T."/>
            <person name="Tanaka T."/>
            <person name="Ishii S."/>
            <person name="Yamamoto J."/>
            <person name="Saito K."/>
            <person name="Kawai Y."/>
            <person name="Isono Y."/>
            <person name="Nakamura Y."/>
            <person name="Nagahari K."/>
            <person name="Murakami K."/>
            <person name="Yasuda T."/>
            <person name="Iwayanagi T."/>
            <person name="Wagatsuma M."/>
            <person name="Shiratori A."/>
            <person name="Sudo H."/>
            <person name="Hosoiri T."/>
            <person name="Kaku Y."/>
            <person name="Kodaira H."/>
            <person name="Kondo H."/>
            <person name="Sugawara M."/>
            <person name="Takahashi M."/>
            <person name="Kanda K."/>
            <person name="Yokoi T."/>
            <person name="Furuya T."/>
            <person name="Kikkawa E."/>
            <person name="Omura Y."/>
            <person name="Abe K."/>
            <person name="Kamihara K."/>
            <person name="Katsuta N."/>
            <person name="Sato K."/>
            <person name="Tanikawa M."/>
            <person name="Yamazaki M."/>
            <person name="Ninomiya K."/>
            <person name="Ishibashi T."/>
            <person name="Yamashita H."/>
            <person name="Murakawa K."/>
            <person name="Fujimori K."/>
            <person name="Tanai H."/>
            <person name="Kimata M."/>
            <person name="Watanabe M."/>
            <person name="Hiraoka S."/>
            <person name="Chiba Y."/>
            <person name="Ishida S."/>
            <person name="Ono Y."/>
            <person name="Takiguchi S."/>
            <person name="Watanabe S."/>
            <person name="Yosida M."/>
            <person name="Hotuta T."/>
            <person name="Kusano J."/>
            <person name="Kanehori K."/>
            <person name="Takahashi-Fujii A."/>
            <person name="Hara H."/>
            <person name="Tanase T.-O."/>
            <person name="Nomura Y."/>
            <person name="Togiya S."/>
            <person name="Komai F."/>
            <person name="Hara R."/>
            <person name="Takeuchi K."/>
            <person name="Arita M."/>
            <person name="Imose N."/>
            <person name="Musashino K."/>
            <person name="Yuuki H."/>
            <person name="Oshima A."/>
            <person name="Sasaki N."/>
            <person name="Aotsuka S."/>
            <person name="Yoshikawa Y."/>
            <person name="Matsunawa H."/>
            <person name="Ichihara T."/>
            <person name="Shiohata N."/>
            <person name="Sano S."/>
            <person name="Moriya S."/>
            <person name="Momiyama H."/>
            <person name="Satoh N."/>
            <person name="Takami S."/>
            <person name="Terashima Y."/>
            <person name="Suzuki O."/>
            <person name="Nakagawa S."/>
            <person name="Senoh A."/>
            <person name="Mizoguchi H."/>
            <person name="Goto Y."/>
            <person name="Shimizu F."/>
            <person name="Wakebe H."/>
            <person name="Hishigaki H."/>
            <person name="Watanabe T."/>
            <person name="Sugiyama A."/>
            <person name="Takemoto M."/>
            <person name="Kawakami B."/>
            <person name="Yamazaki M."/>
            <person name="Watanabe K."/>
            <person name="Kumagai A."/>
            <person name="Itakura S."/>
            <person name="Fukuzumi Y."/>
            <person name="Fujimori Y."/>
            <person name="Komiyama M."/>
            <person name="Tashiro H."/>
            <person name="Tanigami A."/>
            <person name="Fujiwara T."/>
            <person name="Ono T."/>
            <person name="Yamada K."/>
            <person name="Fujii Y."/>
            <person name="Ozaki K."/>
            <person name="Hirao M."/>
            <person name="Ohmori Y."/>
            <person name="Kawabata A."/>
            <person name="Hikiji T."/>
            <person name="Kobatake N."/>
            <person name="Inagaki H."/>
            <person name="Ikema Y."/>
            <person name="Okamoto S."/>
            <person name="Okitani R."/>
            <person name="Kawakami T."/>
            <person name="Noguchi S."/>
            <person name="Itoh T."/>
            <person name="Shigeta K."/>
            <person name="Senba T."/>
            <person name="Matsumura K."/>
            <person name="Nakajima Y."/>
            <person name="Mizuno T."/>
            <person name="Morinaga M."/>
            <person name="Sasaki M."/>
            <person name="Togashi T."/>
            <person name="Oyama M."/>
            <person name="Hata H."/>
            <person name="Watanabe M."/>
            <person name="Komatsu T."/>
            <person name="Mizushima-Sugano J."/>
            <person name="Satoh T."/>
            <person name="Shirai Y."/>
            <person name="Takahashi Y."/>
            <person name="Nakagawa K."/>
            <person name="Okumura K."/>
            <person name="Nagase T."/>
            <person name="Nomura N."/>
            <person name="Kikuchi H."/>
            <person name="Masuho Y."/>
            <person name="Yamashita R."/>
            <person name="Nakai K."/>
            <person name="Yada T."/>
            <person name="Nakamura Y."/>
            <person name="Ohara O."/>
            <person name="Isogai T."/>
            <person name="Sugano S."/>
        </authorList>
    </citation>
    <scope>NUCLEOTIDE SEQUENCE [LARGE SCALE MRNA]</scope>
    <source>
        <tissue>Lung</tissue>
    </source>
</reference>
<reference key="6">
    <citation type="journal article" date="2004" name="Genome Res.">
        <title>The status, quality, and expansion of the NIH full-length cDNA project: the Mammalian Gene Collection (MGC).</title>
        <authorList>
            <consortium name="The MGC Project Team"/>
        </authorList>
    </citation>
    <scope>NUCLEOTIDE SEQUENCE [LARGE SCALE MRNA]</scope>
    <source>
        <tissue>Placenta</tissue>
    </source>
</reference>
<reference key="7">
    <citation type="journal article" date="2003" name="Biochem. J.">
        <title>Effect of mutation of two critical glutamic acid residues on the activity and stability of human carboxypeptidase M and characterization of its signal for glycosylphosphatidylinositol anchoring.</title>
        <authorList>
            <person name="Tan F."/>
            <person name="Balsitis S."/>
            <person name="Black J.K."/>
            <person name="Bloechl A."/>
            <person name="Mao J.-F."/>
            <person name="Becker R.P."/>
            <person name="Schacht D."/>
            <person name="Skidgel R.A."/>
        </authorList>
    </citation>
    <scope>PROTEIN SEQUENCE OF 18-21</scope>
    <scope>GPI-ANCHOR AT SER-423</scope>
    <scope>BIOPHYSICOCHEMICAL PROPERTIES</scope>
    <scope>FUNCTION</scope>
    <scope>CATALYTIC ACTIVITY</scope>
    <scope>SITE</scope>
    <scope>SUBCELLULAR LOCATION</scope>
    <scope>IDENTIFICATION BY MASS SPECTROMETRY</scope>
    <scope>MUTAGENESIS OF GLU-277; GLU-281 AND SER-423</scope>
</reference>
<reference key="8">
    <citation type="journal article" date="2009" name="J. Proteome Res.">
        <title>Glycoproteomics analysis of human liver tissue by combination of multiple enzyme digestion and hydrazide chemistry.</title>
        <authorList>
            <person name="Chen R."/>
            <person name="Jiang X."/>
            <person name="Sun D."/>
            <person name="Han G."/>
            <person name="Wang F."/>
            <person name="Ye M."/>
            <person name="Wang L."/>
            <person name="Zou H."/>
        </authorList>
    </citation>
    <scope>GLYCOSYLATION [LARGE SCALE ANALYSIS] AT ASN-115 AND ASN-164</scope>
    <source>
        <tissue>Liver</tissue>
    </source>
</reference>
<reference key="9">
    <citation type="journal article" date="2004" name="J. Mol. Biol.">
        <title>Crystal structure of human carboxypeptidase M, a membrane-bound enzyme that regulates peptide hormone activity.</title>
        <authorList>
            <person name="Reverter D."/>
            <person name="Maskos K."/>
            <person name="Tan F."/>
            <person name="Skidgel R.A."/>
            <person name="Bode W."/>
        </authorList>
    </citation>
    <scope>X-RAY CRYSTALLOGRAPHY (3.0 ANGSTROMS) OF 18-443 IN COMPLEX WITH ZINC IONS</scope>
    <scope>DISULFIDE BONDS</scope>
    <scope>GLYCOSYLATION AT ASN-38 AND ASN-115</scope>
</reference>
<dbReference type="EC" id="3.4.17.12" evidence="3"/>
<dbReference type="EMBL" id="J04970">
    <property type="protein sequence ID" value="AAA35651.2"/>
    <property type="molecule type" value="mRNA"/>
</dbReference>
<dbReference type="EMBL" id="AF262947">
    <property type="protein sequence ID" value="AAG47641.1"/>
    <property type="molecule type" value="Genomic_DNA"/>
</dbReference>
<dbReference type="EMBL" id="AF262940">
    <property type="protein sequence ID" value="AAG47641.1"/>
    <property type="status" value="JOINED"/>
    <property type="molecule type" value="Genomic_DNA"/>
</dbReference>
<dbReference type="EMBL" id="AF262941">
    <property type="protein sequence ID" value="AAG47641.1"/>
    <property type="status" value="JOINED"/>
    <property type="molecule type" value="Genomic_DNA"/>
</dbReference>
<dbReference type="EMBL" id="AF262942">
    <property type="protein sequence ID" value="AAG47641.1"/>
    <property type="status" value="JOINED"/>
    <property type="molecule type" value="Genomic_DNA"/>
</dbReference>
<dbReference type="EMBL" id="AF262943">
    <property type="protein sequence ID" value="AAG47641.1"/>
    <property type="status" value="JOINED"/>
    <property type="molecule type" value="Genomic_DNA"/>
</dbReference>
<dbReference type="EMBL" id="AF262944">
    <property type="protein sequence ID" value="AAG47641.1"/>
    <property type="status" value="JOINED"/>
    <property type="molecule type" value="Genomic_DNA"/>
</dbReference>
<dbReference type="EMBL" id="AF262945">
    <property type="protein sequence ID" value="AAG47641.1"/>
    <property type="status" value="JOINED"/>
    <property type="molecule type" value="Genomic_DNA"/>
</dbReference>
<dbReference type="EMBL" id="AF262946">
    <property type="protein sequence ID" value="AAG47641.1"/>
    <property type="status" value="JOINED"/>
    <property type="molecule type" value="Genomic_DNA"/>
</dbReference>
<dbReference type="EMBL" id="AF368463">
    <property type="protein sequence ID" value="AAK69717.1"/>
    <property type="molecule type" value="mRNA"/>
</dbReference>
<dbReference type="EMBL" id="AK313180">
    <property type="protein sequence ID" value="BAG35997.1"/>
    <property type="molecule type" value="mRNA"/>
</dbReference>
<dbReference type="EMBL" id="BC022276">
    <property type="protein sequence ID" value="AAH22276.1"/>
    <property type="molecule type" value="mRNA"/>
</dbReference>
<dbReference type="CCDS" id="CCDS8987.1"/>
<dbReference type="PIR" id="A32619">
    <property type="entry name" value="A32619"/>
</dbReference>
<dbReference type="RefSeq" id="NP_001005502.1">
    <property type="nucleotide sequence ID" value="NM_001005502.3"/>
</dbReference>
<dbReference type="RefSeq" id="NP_001400317.1">
    <property type="nucleotide sequence ID" value="NM_001413388.1"/>
</dbReference>
<dbReference type="RefSeq" id="NP_001400318.1">
    <property type="nucleotide sequence ID" value="NM_001413389.1"/>
</dbReference>
<dbReference type="RefSeq" id="NP_001400319.1">
    <property type="nucleotide sequence ID" value="NM_001413390.1"/>
</dbReference>
<dbReference type="RefSeq" id="NP_001400320.1">
    <property type="nucleotide sequence ID" value="NM_001413391.1"/>
</dbReference>
<dbReference type="RefSeq" id="NP_001865.1">
    <property type="nucleotide sequence ID" value="NM_001874.5"/>
</dbReference>
<dbReference type="RefSeq" id="NP_938079.1">
    <property type="nucleotide sequence ID" value="NM_198320.5"/>
</dbReference>
<dbReference type="PDB" id="1UWY">
    <property type="method" value="X-ray"/>
    <property type="resolution" value="3.00 A"/>
    <property type="chains" value="A=18-443"/>
</dbReference>
<dbReference type="PDBsum" id="1UWY"/>
<dbReference type="SMR" id="P14384"/>
<dbReference type="BioGRID" id="107760">
    <property type="interactions" value="64"/>
</dbReference>
<dbReference type="CORUM" id="P14384"/>
<dbReference type="FunCoup" id="P14384">
    <property type="interactions" value="846"/>
</dbReference>
<dbReference type="IntAct" id="P14384">
    <property type="interactions" value="47"/>
</dbReference>
<dbReference type="STRING" id="9606.ENSP00000339157"/>
<dbReference type="BindingDB" id="P14384"/>
<dbReference type="ChEMBL" id="CHEMBL3038"/>
<dbReference type="GuidetoPHARMACOLOGY" id="1596"/>
<dbReference type="MEROPS" id="M14.006"/>
<dbReference type="GlyCosmos" id="P14384">
    <property type="glycosylation" value="5 sites, No reported glycans"/>
</dbReference>
<dbReference type="GlyGen" id="P14384">
    <property type="glycosylation" value="9 sites, 35 N-linked glycans (5 sites), 1 O-linked glycan (1 site)"/>
</dbReference>
<dbReference type="iPTMnet" id="P14384"/>
<dbReference type="PhosphoSitePlus" id="P14384"/>
<dbReference type="SwissPalm" id="P14384"/>
<dbReference type="BioMuta" id="CPM"/>
<dbReference type="DMDM" id="14916957"/>
<dbReference type="jPOST" id="P14384"/>
<dbReference type="MassIVE" id="P14384"/>
<dbReference type="PaxDb" id="9606-ENSP00000448517"/>
<dbReference type="PeptideAtlas" id="P14384"/>
<dbReference type="ProteomicsDB" id="53049"/>
<dbReference type="Pumba" id="P14384"/>
<dbReference type="Antibodypedia" id="975">
    <property type="antibodies" value="367 antibodies from 35 providers"/>
</dbReference>
<dbReference type="DNASU" id="1368"/>
<dbReference type="Ensembl" id="ENST00000338356.7">
    <property type="protein sequence ID" value="ENSP00000339157.3"/>
    <property type="gene ID" value="ENSG00000135678.12"/>
</dbReference>
<dbReference type="Ensembl" id="ENST00000546373.5">
    <property type="protein sequence ID" value="ENSP00000447255.1"/>
    <property type="gene ID" value="ENSG00000135678.12"/>
</dbReference>
<dbReference type="Ensembl" id="ENST00000551568.6">
    <property type="protein sequence ID" value="ENSP00000448517.1"/>
    <property type="gene ID" value="ENSG00000135678.12"/>
</dbReference>
<dbReference type="GeneID" id="1368"/>
<dbReference type="KEGG" id="hsa:1368"/>
<dbReference type="MANE-Select" id="ENST00000551568.6">
    <property type="protein sequence ID" value="ENSP00000448517.1"/>
    <property type="RefSeq nucleotide sequence ID" value="NM_198320.5"/>
    <property type="RefSeq protein sequence ID" value="NP_938079.1"/>
</dbReference>
<dbReference type="UCSC" id="uc001sup.4">
    <property type="organism name" value="human"/>
</dbReference>
<dbReference type="AGR" id="HGNC:2311"/>
<dbReference type="CTD" id="1368"/>
<dbReference type="DisGeNET" id="1368"/>
<dbReference type="GeneCards" id="CPM"/>
<dbReference type="HGNC" id="HGNC:2311">
    <property type="gene designation" value="CPM"/>
</dbReference>
<dbReference type="HPA" id="ENSG00000135678">
    <property type="expression patterns" value="Tissue enhanced (adipose)"/>
</dbReference>
<dbReference type="MIM" id="114860">
    <property type="type" value="gene"/>
</dbReference>
<dbReference type="neXtProt" id="NX_P14384"/>
<dbReference type="OpenTargets" id="ENSG00000135678"/>
<dbReference type="PharmGKB" id="PA26828"/>
<dbReference type="VEuPathDB" id="HostDB:ENSG00000135678"/>
<dbReference type="eggNOG" id="KOG2649">
    <property type="taxonomic scope" value="Eukaryota"/>
</dbReference>
<dbReference type="GeneTree" id="ENSGT00940000158580"/>
<dbReference type="HOGENOM" id="CLU_006722_1_0_1"/>
<dbReference type="InParanoid" id="P14384"/>
<dbReference type="OMA" id="GHEPYLT"/>
<dbReference type="OrthoDB" id="10249045at2759"/>
<dbReference type="PAN-GO" id="P14384">
    <property type="GO annotations" value="4 GO annotations based on evolutionary models"/>
</dbReference>
<dbReference type="PhylomeDB" id="P14384"/>
<dbReference type="TreeFam" id="TF315592"/>
<dbReference type="BRENDA" id="3.4.17.12">
    <property type="organism ID" value="2681"/>
</dbReference>
<dbReference type="PathwayCommons" id="P14384"/>
<dbReference type="Reactome" id="R-HSA-163125">
    <property type="pathway name" value="Post-translational modification: synthesis of GPI-anchored proteins"/>
</dbReference>
<dbReference type="SABIO-RK" id="P14384"/>
<dbReference type="SignaLink" id="P14384"/>
<dbReference type="SIGNOR" id="P14384"/>
<dbReference type="BioGRID-ORCS" id="1368">
    <property type="hits" value="16 hits in 1167 CRISPR screens"/>
</dbReference>
<dbReference type="ChiTaRS" id="CPM">
    <property type="organism name" value="human"/>
</dbReference>
<dbReference type="EvolutionaryTrace" id="P14384"/>
<dbReference type="GeneWiki" id="CPM_(gene)"/>
<dbReference type="GenomeRNAi" id="1368"/>
<dbReference type="Pharos" id="P14384">
    <property type="development level" value="Tchem"/>
</dbReference>
<dbReference type="PRO" id="PR:P14384"/>
<dbReference type="Proteomes" id="UP000005640">
    <property type="component" value="Chromosome 12"/>
</dbReference>
<dbReference type="RNAct" id="P14384">
    <property type="molecule type" value="protein"/>
</dbReference>
<dbReference type="Bgee" id="ENSG00000135678">
    <property type="expression patterns" value="Expressed in lower lobe of lung and 183 other cell types or tissues"/>
</dbReference>
<dbReference type="ExpressionAtlas" id="P14384">
    <property type="expression patterns" value="baseline and differential"/>
</dbReference>
<dbReference type="GO" id="GO:0009986">
    <property type="term" value="C:cell surface"/>
    <property type="evidence" value="ECO:0007005"/>
    <property type="project" value="UniProtKB"/>
</dbReference>
<dbReference type="GO" id="GO:0070062">
    <property type="term" value="C:extracellular exosome"/>
    <property type="evidence" value="ECO:0007005"/>
    <property type="project" value="UniProtKB"/>
</dbReference>
<dbReference type="GO" id="GO:0005576">
    <property type="term" value="C:extracellular region"/>
    <property type="evidence" value="ECO:0000304"/>
    <property type="project" value="Reactome"/>
</dbReference>
<dbReference type="GO" id="GO:0005615">
    <property type="term" value="C:extracellular space"/>
    <property type="evidence" value="ECO:0000318"/>
    <property type="project" value="GO_Central"/>
</dbReference>
<dbReference type="GO" id="GO:0005886">
    <property type="term" value="C:plasma membrane"/>
    <property type="evidence" value="ECO:0000304"/>
    <property type="project" value="Reactome"/>
</dbReference>
<dbReference type="GO" id="GO:0098552">
    <property type="term" value="C:side of membrane"/>
    <property type="evidence" value="ECO:0007669"/>
    <property type="project" value="UniProtKB-KW"/>
</dbReference>
<dbReference type="GO" id="GO:0004180">
    <property type="term" value="F:carboxypeptidase activity"/>
    <property type="evidence" value="ECO:0000304"/>
    <property type="project" value="ProtInc"/>
</dbReference>
<dbReference type="GO" id="GO:0004181">
    <property type="term" value="F:metallocarboxypeptidase activity"/>
    <property type="evidence" value="ECO:0000318"/>
    <property type="project" value="GO_Central"/>
</dbReference>
<dbReference type="GO" id="GO:0008270">
    <property type="term" value="F:zinc ion binding"/>
    <property type="evidence" value="ECO:0007669"/>
    <property type="project" value="InterPro"/>
</dbReference>
<dbReference type="GO" id="GO:0009653">
    <property type="term" value="P:anatomical structure morphogenesis"/>
    <property type="evidence" value="ECO:0000304"/>
    <property type="project" value="ProtInc"/>
</dbReference>
<dbReference type="GO" id="GO:0006518">
    <property type="term" value="P:peptide metabolic process"/>
    <property type="evidence" value="ECO:0000318"/>
    <property type="project" value="GO_Central"/>
</dbReference>
<dbReference type="GO" id="GO:0016485">
    <property type="term" value="P:protein processing"/>
    <property type="evidence" value="ECO:0000318"/>
    <property type="project" value="GO_Central"/>
</dbReference>
<dbReference type="CDD" id="cd03866">
    <property type="entry name" value="M14_CPM"/>
    <property type="match status" value="1"/>
</dbReference>
<dbReference type="CDD" id="cd11308">
    <property type="entry name" value="Peptidase_M14NE-CP-C_like"/>
    <property type="match status" value="1"/>
</dbReference>
<dbReference type="FunFam" id="2.60.40.1120:FF:000014">
    <property type="entry name" value="Carboxypeptidase M"/>
    <property type="match status" value="1"/>
</dbReference>
<dbReference type="FunFam" id="3.40.630.10:FF:000041">
    <property type="entry name" value="Carboxypeptidase M"/>
    <property type="match status" value="1"/>
</dbReference>
<dbReference type="Gene3D" id="2.60.40.1120">
    <property type="entry name" value="Carboxypeptidase-like, regulatory domain"/>
    <property type="match status" value="1"/>
</dbReference>
<dbReference type="Gene3D" id="3.40.630.10">
    <property type="entry name" value="Zn peptidases"/>
    <property type="match status" value="1"/>
</dbReference>
<dbReference type="InterPro" id="IPR008969">
    <property type="entry name" value="CarboxyPept-like_regulatory"/>
</dbReference>
<dbReference type="InterPro" id="IPR033842">
    <property type="entry name" value="CPM_N"/>
</dbReference>
<dbReference type="InterPro" id="IPR000834">
    <property type="entry name" value="Peptidase_M14"/>
</dbReference>
<dbReference type="InterPro" id="IPR050753">
    <property type="entry name" value="Peptidase_M14_domain"/>
</dbReference>
<dbReference type="PANTHER" id="PTHR11532:SF84">
    <property type="entry name" value="CARBOXYPEPTIDASE M"/>
    <property type="match status" value="1"/>
</dbReference>
<dbReference type="PANTHER" id="PTHR11532">
    <property type="entry name" value="PROTEASE M14 CARBOXYPEPTIDASE"/>
    <property type="match status" value="1"/>
</dbReference>
<dbReference type="Pfam" id="PF13620">
    <property type="entry name" value="CarboxypepD_reg"/>
    <property type="match status" value="1"/>
</dbReference>
<dbReference type="Pfam" id="PF00246">
    <property type="entry name" value="Peptidase_M14"/>
    <property type="match status" value="1"/>
</dbReference>
<dbReference type="PRINTS" id="PR00765">
    <property type="entry name" value="CRBOXYPTASEA"/>
</dbReference>
<dbReference type="SMART" id="SM00631">
    <property type="entry name" value="Zn_pept"/>
    <property type="match status" value="1"/>
</dbReference>
<dbReference type="SUPFAM" id="SSF49464">
    <property type="entry name" value="Carboxypeptidase regulatory domain-like"/>
    <property type="match status" value="1"/>
</dbReference>
<dbReference type="SUPFAM" id="SSF53187">
    <property type="entry name" value="Zn-dependent exopeptidases"/>
    <property type="match status" value="1"/>
</dbReference>
<dbReference type="PROSITE" id="PS00132">
    <property type="entry name" value="CARBOXYPEPT_ZN_1"/>
    <property type="match status" value="1"/>
</dbReference>
<dbReference type="PROSITE" id="PS00133">
    <property type="entry name" value="CARBOXYPEPT_ZN_2"/>
    <property type="match status" value="1"/>
</dbReference>
<dbReference type="PROSITE" id="PS52035">
    <property type="entry name" value="PEPTIDASE_M14"/>
    <property type="match status" value="1"/>
</dbReference>
<sequence length="443" mass="50514">MDFPCLWLGLLLPLVAALDFNYHRQEGMEAFLKTVAQNYSSVTHLHSIGKSVKGRNLWVLVVGRFPKEHRIGIPEFKYVANMHGDETVGRELLLHLIDYLVTSDGKDPEITNLINSTRIHIMPSMNPDGFEAVKKPDCYYSIGRENYNQYDLNRNFPDAFEYNNVSRQPETVAVMKWLKTETFVLSANLHGGALVASYPFDNGVQATGALYSRSLTPDDDVFQYLAHTYASRNPNMKKGDECKNKMNFPNGVTNGYSWYPLQGGMQDYNYIWAQCFEITLELSCCKYPREEKLPSFWNNNKASLIEYIKQVHLGVKGQVFDQNGNPLPNVIVEVQDRKHICPYRTNKYGEYYLLLLPGSYIINVTVPGHDPHITKVIIPEKSQNFSALKKDILLPFQGQLDSIPVSNPSCPMIPLYRNLPDHSAATKPSLFLFLVSLLHIFFK</sequence>
<accession>P14384</accession>
<accession>B2R800</accession>
<accession>Q9H2K9</accession>
<name>CBPM_HUMAN</name>